<comment type="function">
    <text evidence="3">Hydrolyzes ATP, and can also hydrolyze GTP with lower efficiency. Has lower affinity for GTP.</text>
</comment>
<comment type="cofactor">
    <cofactor evidence="1">
        <name>Mg(2+)</name>
        <dbReference type="ChEBI" id="CHEBI:18420"/>
    </cofactor>
</comment>
<comment type="subunit">
    <text evidence="3">Monomer.</text>
</comment>
<comment type="subcellular location">
    <subcellularLocation>
        <location evidence="3">Cytoplasm</location>
    </subcellularLocation>
    <subcellularLocation>
        <location evidence="3">Nucleus</location>
    </subcellularLocation>
    <subcellularLocation>
        <location evidence="3">Nucleus</location>
        <location evidence="3">Nucleolus</location>
    </subcellularLocation>
    <text evidence="3">Predominantly cytoplasmic, shuttles between the nucleus and the cytoplasm.</text>
</comment>
<comment type="similarity">
    <text evidence="3">Belongs to the TRAFAC class OBG-HflX-like GTPase superfamily. OBG GTPase family. YchF/OLA1 subfamily.</text>
</comment>
<organism>
    <name type="scientific">Bos taurus</name>
    <name type="common">Bovine</name>
    <dbReference type="NCBI Taxonomy" id="9913"/>
    <lineage>
        <taxon>Eukaryota</taxon>
        <taxon>Metazoa</taxon>
        <taxon>Chordata</taxon>
        <taxon>Craniata</taxon>
        <taxon>Vertebrata</taxon>
        <taxon>Euteleostomi</taxon>
        <taxon>Mammalia</taxon>
        <taxon>Eutheria</taxon>
        <taxon>Laurasiatheria</taxon>
        <taxon>Artiodactyla</taxon>
        <taxon>Ruminantia</taxon>
        <taxon>Pecora</taxon>
        <taxon>Bovidae</taxon>
        <taxon>Bovinae</taxon>
        <taxon>Bos</taxon>
    </lineage>
</organism>
<sequence>MPPKKGGDGIKPPPIIGRFGTSLKIGIVGLPNVGKSTFFNVLTNSQASAENFPFCTIDPNESRVPVPDERFDFLCQYHKPASKIPAFLNVVDIAGLVKGAHNGQGLGNAFLSHISACDGIFHLTRAFEDDDITHVEGSVDPVRDIEIIHEELQLKDEEMVGPIIDKLEKVAVRGGDKKLKPEYDIMCKVKSWVIDQKKPVRFYHDWNDKEIEVLNKHLFLTSKPMVYLVNLSEKDYIRKKNKWLIKIKEWVDKYDPGALVIPFSGALELRLQELSAEERQKYLEANMTQSALPKIIKAGFAALQLEYFFTAGPDEVRAWTIRKGTKAPQAAGKIHTDFEKGFIMAEVMKYEDFKEEGSENAVKAAGKYRQQGRNYIVEDGDIIFFKFNTPQQPKKK</sequence>
<dbReference type="EMBL" id="BC113336">
    <property type="protein sequence ID" value="AAI13337.1"/>
    <property type="molecule type" value="mRNA"/>
</dbReference>
<dbReference type="RefSeq" id="NP_001039510.1">
    <property type="nucleotide sequence ID" value="NM_001046045.1"/>
</dbReference>
<dbReference type="SMR" id="Q2HJ33"/>
<dbReference type="FunCoup" id="Q2HJ33">
    <property type="interactions" value="2436"/>
</dbReference>
<dbReference type="STRING" id="9913.ENSBTAP00000009160"/>
<dbReference type="PaxDb" id="9913-ENSBTAP00000009160"/>
<dbReference type="PeptideAtlas" id="Q2HJ33"/>
<dbReference type="Ensembl" id="ENSBTAT00000009160.6">
    <property type="protein sequence ID" value="ENSBTAP00000009160.5"/>
    <property type="gene ID" value="ENSBTAG00000006970.7"/>
</dbReference>
<dbReference type="GeneID" id="509966"/>
<dbReference type="KEGG" id="bta:509966"/>
<dbReference type="CTD" id="29789"/>
<dbReference type="VEuPathDB" id="HostDB:ENSBTAG00000006970"/>
<dbReference type="VGNC" id="VGNC:32416">
    <property type="gene designation" value="OLA1"/>
</dbReference>
<dbReference type="eggNOG" id="KOG1491">
    <property type="taxonomic scope" value="Eukaryota"/>
</dbReference>
<dbReference type="GeneTree" id="ENSGT00390000000673"/>
<dbReference type="HOGENOM" id="CLU_018395_1_0_1"/>
<dbReference type="InParanoid" id="Q2HJ33"/>
<dbReference type="OMA" id="VLRCFDN"/>
<dbReference type="OrthoDB" id="424823at2759"/>
<dbReference type="TreeFam" id="TF300774"/>
<dbReference type="Reactome" id="R-BTA-114608">
    <property type="pathway name" value="Platelet degranulation"/>
</dbReference>
<dbReference type="Proteomes" id="UP000009136">
    <property type="component" value="Chromosome 2"/>
</dbReference>
<dbReference type="Bgee" id="ENSBTAG00000006970">
    <property type="expression patterns" value="Expressed in semimembranosus muscle and 104 other cell types or tissues"/>
</dbReference>
<dbReference type="GO" id="GO:0005737">
    <property type="term" value="C:cytoplasm"/>
    <property type="evidence" value="ECO:0000318"/>
    <property type="project" value="GO_Central"/>
</dbReference>
<dbReference type="GO" id="GO:0005730">
    <property type="term" value="C:nucleolus"/>
    <property type="evidence" value="ECO:0007669"/>
    <property type="project" value="UniProtKB-SubCell"/>
</dbReference>
<dbReference type="GO" id="GO:0005524">
    <property type="term" value="F:ATP binding"/>
    <property type="evidence" value="ECO:0007669"/>
    <property type="project" value="UniProtKB-UniRule"/>
</dbReference>
<dbReference type="GO" id="GO:0016887">
    <property type="term" value="F:ATP hydrolysis activity"/>
    <property type="evidence" value="ECO:0000318"/>
    <property type="project" value="GO_Central"/>
</dbReference>
<dbReference type="GO" id="GO:0005525">
    <property type="term" value="F:GTP binding"/>
    <property type="evidence" value="ECO:0007669"/>
    <property type="project" value="InterPro"/>
</dbReference>
<dbReference type="GO" id="GO:0046872">
    <property type="term" value="F:metal ion binding"/>
    <property type="evidence" value="ECO:0007669"/>
    <property type="project" value="UniProtKB-KW"/>
</dbReference>
<dbReference type="GO" id="GO:0043023">
    <property type="term" value="F:ribosomal large subunit binding"/>
    <property type="evidence" value="ECO:0007669"/>
    <property type="project" value="UniProtKB-UniRule"/>
</dbReference>
<dbReference type="CDD" id="cd04867">
    <property type="entry name" value="TGS_YchF_OLA1"/>
    <property type="match status" value="1"/>
</dbReference>
<dbReference type="CDD" id="cd01900">
    <property type="entry name" value="YchF"/>
    <property type="match status" value="1"/>
</dbReference>
<dbReference type="FunFam" id="1.10.150.300:FF:000003">
    <property type="entry name" value="Obg-like ATPase 1"/>
    <property type="match status" value="1"/>
</dbReference>
<dbReference type="FunFam" id="3.10.20.30:FF:000029">
    <property type="entry name" value="Obg-like ATPase 1"/>
    <property type="match status" value="1"/>
</dbReference>
<dbReference type="Gene3D" id="3.10.20.30">
    <property type="match status" value="1"/>
</dbReference>
<dbReference type="Gene3D" id="3.40.50.300">
    <property type="entry name" value="P-loop containing nucleotide triphosphate hydrolases"/>
    <property type="match status" value="1"/>
</dbReference>
<dbReference type="Gene3D" id="1.10.150.300">
    <property type="entry name" value="TGS-like domain"/>
    <property type="match status" value="1"/>
</dbReference>
<dbReference type="HAMAP" id="MF_00944">
    <property type="entry name" value="YchF_OLA1_ATPase"/>
    <property type="match status" value="1"/>
</dbReference>
<dbReference type="InterPro" id="IPR004396">
    <property type="entry name" value="ATPase_YchF/OLA1"/>
</dbReference>
<dbReference type="InterPro" id="IPR012675">
    <property type="entry name" value="Beta-grasp_dom_sf"/>
</dbReference>
<dbReference type="InterPro" id="IPR031167">
    <property type="entry name" value="G_OBG"/>
</dbReference>
<dbReference type="InterPro" id="IPR006073">
    <property type="entry name" value="GTP-bd"/>
</dbReference>
<dbReference type="InterPro" id="IPR027417">
    <property type="entry name" value="P-loop_NTPase"/>
</dbReference>
<dbReference type="InterPro" id="IPR004095">
    <property type="entry name" value="TGS"/>
</dbReference>
<dbReference type="InterPro" id="IPR012676">
    <property type="entry name" value="TGS-like"/>
</dbReference>
<dbReference type="InterPro" id="IPR023192">
    <property type="entry name" value="TGS-like_dom_sf"/>
</dbReference>
<dbReference type="InterPro" id="IPR013029">
    <property type="entry name" value="YchF_C"/>
</dbReference>
<dbReference type="InterPro" id="IPR041706">
    <property type="entry name" value="YchF_N"/>
</dbReference>
<dbReference type="NCBIfam" id="TIGR00092">
    <property type="entry name" value="redox-regulated ATPase YchF"/>
    <property type="match status" value="1"/>
</dbReference>
<dbReference type="PANTHER" id="PTHR23305">
    <property type="entry name" value="OBG GTPASE FAMILY"/>
    <property type="match status" value="1"/>
</dbReference>
<dbReference type="PANTHER" id="PTHR23305:SF11">
    <property type="entry name" value="OBG-LIKE ATPASE 1"/>
    <property type="match status" value="1"/>
</dbReference>
<dbReference type="Pfam" id="PF01926">
    <property type="entry name" value="MMR_HSR1"/>
    <property type="match status" value="1"/>
</dbReference>
<dbReference type="Pfam" id="PF06071">
    <property type="entry name" value="YchF-GTPase_C"/>
    <property type="match status" value="1"/>
</dbReference>
<dbReference type="PIRSF" id="PIRSF006641">
    <property type="entry name" value="CHP00092"/>
    <property type="match status" value="1"/>
</dbReference>
<dbReference type="PRINTS" id="PR00326">
    <property type="entry name" value="GTP1OBG"/>
</dbReference>
<dbReference type="SUPFAM" id="SSF52540">
    <property type="entry name" value="P-loop containing nucleoside triphosphate hydrolases"/>
    <property type="match status" value="1"/>
</dbReference>
<dbReference type="SUPFAM" id="SSF81271">
    <property type="entry name" value="TGS-like"/>
    <property type="match status" value="1"/>
</dbReference>
<dbReference type="PROSITE" id="PS51710">
    <property type="entry name" value="G_OBG"/>
    <property type="match status" value="1"/>
</dbReference>
<dbReference type="PROSITE" id="PS51880">
    <property type="entry name" value="TGS"/>
    <property type="match status" value="1"/>
</dbReference>
<keyword id="KW-0007">Acetylation</keyword>
<keyword id="KW-0067">ATP-binding</keyword>
<keyword id="KW-0963">Cytoplasm</keyword>
<keyword id="KW-0378">Hydrolase</keyword>
<keyword id="KW-0460">Magnesium</keyword>
<keyword id="KW-0479">Metal-binding</keyword>
<keyword id="KW-0547">Nucleotide-binding</keyword>
<keyword id="KW-0539">Nucleus</keyword>
<keyword id="KW-1185">Reference proteome</keyword>
<reference key="1">
    <citation type="submission" date="2006-02" db="EMBL/GenBank/DDBJ databases">
        <authorList>
            <consortium name="NIH - Mammalian Gene Collection (MGC) project"/>
        </authorList>
    </citation>
    <scope>NUCLEOTIDE SEQUENCE [LARGE SCALE MRNA]</scope>
    <source>
        <strain>Hereford</strain>
        <tissue>Uterus</tissue>
    </source>
</reference>
<protein>
    <recommendedName>
        <fullName evidence="3">Obg-like ATPase 1</fullName>
    </recommendedName>
</protein>
<proteinExistence type="evidence at transcript level"/>
<gene>
    <name evidence="3" type="primary">OLA1</name>
</gene>
<name>OLA1_BOVIN</name>
<accession>Q2HJ33</accession>
<evidence type="ECO:0000250" key="1"/>
<evidence type="ECO:0000250" key="2">
    <source>
        <dbReference type="UniProtKB" id="Q9NTK5"/>
    </source>
</evidence>
<evidence type="ECO:0000255" key="3">
    <source>
        <dbReference type="HAMAP-Rule" id="MF_03167"/>
    </source>
</evidence>
<evidence type="ECO:0000255" key="4">
    <source>
        <dbReference type="PROSITE-ProRule" id="PRU01228"/>
    </source>
</evidence>
<feature type="chain" id="PRO_0000354696" description="Obg-like ATPase 1">
    <location>
        <begin position="1"/>
        <end position="396"/>
    </location>
</feature>
<feature type="domain" description="OBG-type G">
    <location>
        <begin position="23"/>
        <end position="283"/>
    </location>
</feature>
<feature type="domain" description="TGS" evidence="4">
    <location>
        <begin position="304"/>
        <end position="387"/>
    </location>
</feature>
<feature type="short sequence motif" description="Nuclear export signal" evidence="3">
    <location>
        <begin position="267"/>
        <end position="274"/>
    </location>
</feature>
<feature type="binding site" evidence="3">
    <location>
        <begin position="32"/>
        <end position="37"/>
    </location>
    <ligand>
        <name>ATP</name>
        <dbReference type="ChEBI" id="CHEBI:30616"/>
    </ligand>
</feature>
<feature type="binding site" evidence="1">
    <location>
        <position position="36"/>
    </location>
    <ligand>
        <name>Mg(2+)</name>
        <dbReference type="ChEBI" id="CHEBI:18420"/>
    </ligand>
</feature>
<feature type="binding site" evidence="1">
    <location>
        <position position="56"/>
    </location>
    <ligand>
        <name>Mg(2+)</name>
        <dbReference type="ChEBI" id="CHEBI:18420"/>
    </ligand>
</feature>
<feature type="binding site" evidence="3">
    <location>
        <position position="231"/>
    </location>
    <ligand>
        <name>ATP</name>
        <dbReference type="ChEBI" id="CHEBI:30616"/>
    </ligand>
</feature>
<feature type="modified residue" description="N6-acetyllysine" evidence="2">
    <location>
        <position position="294"/>
    </location>
</feature>